<evidence type="ECO:0000250" key="1">
    <source>
        <dbReference type="UniProtKB" id="A0A1C9J6A7"/>
    </source>
</evidence>
<evidence type="ECO:0000250" key="2">
    <source>
        <dbReference type="UniProtKB" id="Q40577"/>
    </source>
</evidence>
<evidence type="ECO:0000250" key="3">
    <source>
        <dbReference type="UniProtKB" id="Q6JD73"/>
    </source>
</evidence>
<evidence type="ECO:0000255" key="4"/>
<evidence type="ECO:0000269" key="5">
    <source>
    </source>
</evidence>
<evidence type="ECO:0000303" key="6">
    <source>
    </source>
</evidence>
<evidence type="ECO:0000305" key="7"/>
<evidence type="ECO:0000305" key="8">
    <source>
    </source>
</evidence>
<dbReference type="EC" id="4.2.3.-" evidence="5"/>
<dbReference type="EC" id="4.2.3.47" evidence="5"/>
<dbReference type="EC" id="4.2.3.15" evidence="5"/>
<dbReference type="EC" id="4.2.3.113" evidence="5"/>
<dbReference type="EMBL" id="HE985292">
    <property type="protein sequence ID" value="CCM43927.1"/>
    <property type="status" value="ALT_INIT"/>
    <property type="molecule type" value="mRNA"/>
</dbReference>
<dbReference type="SMR" id="A0A6P6W6H5"/>
<dbReference type="OrthoDB" id="1936865at2759"/>
<dbReference type="UniPathway" id="UPA00213"/>
<dbReference type="Proteomes" id="UP000515148">
    <property type="component" value="Unplaced"/>
</dbReference>
<dbReference type="GO" id="GO:0009507">
    <property type="term" value="C:chloroplast"/>
    <property type="evidence" value="ECO:0007669"/>
    <property type="project" value="UniProtKB-SubCell"/>
</dbReference>
<dbReference type="GO" id="GO:0000287">
    <property type="term" value="F:magnesium ion binding"/>
    <property type="evidence" value="ECO:0007669"/>
    <property type="project" value="InterPro"/>
</dbReference>
<dbReference type="GO" id="GO:0050551">
    <property type="term" value="F:myrcene synthase activity"/>
    <property type="evidence" value="ECO:0000314"/>
    <property type="project" value="UniProtKB"/>
</dbReference>
<dbReference type="GO" id="GO:0050550">
    <property type="term" value="F:pinene synthase activity"/>
    <property type="evidence" value="ECO:0000314"/>
    <property type="project" value="UniProtKB"/>
</dbReference>
<dbReference type="GO" id="GO:0080015">
    <property type="term" value="F:sabinene synthase activity"/>
    <property type="evidence" value="ECO:0000314"/>
    <property type="project" value="UniProtKB"/>
</dbReference>
<dbReference type="GO" id="GO:0046248">
    <property type="term" value="P:alpha-pinene biosynthetic process"/>
    <property type="evidence" value="ECO:0000314"/>
    <property type="project" value="UniProtKB"/>
</dbReference>
<dbReference type="GO" id="GO:0016102">
    <property type="term" value="P:diterpenoid biosynthetic process"/>
    <property type="evidence" value="ECO:0007669"/>
    <property type="project" value="InterPro"/>
</dbReference>
<dbReference type="GO" id="GO:0046250">
    <property type="term" value="P:limonene biosynthetic process"/>
    <property type="evidence" value="ECO:0000314"/>
    <property type="project" value="UniProtKB"/>
</dbReference>
<dbReference type="GO" id="GO:0016098">
    <property type="term" value="P:monoterpenoid metabolic process"/>
    <property type="evidence" value="ECO:0000314"/>
    <property type="project" value="UniProtKB"/>
</dbReference>
<dbReference type="CDD" id="cd00684">
    <property type="entry name" value="Terpene_cyclase_plant_C1"/>
    <property type="match status" value="1"/>
</dbReference>
<dbReference type="FunFam" id="1.10.600.10:FF:000007">
    <property type="entry name" value="Isoprene synthase, chloroplastic"/>
    <property type="match status" value="1"/>
</dbReference>
<dbReference type="FunFam" id="1.50.10.130:FF:000001">
    <property type="entry name" value="Isoprene synthase, chloroplastic"/>
    <property type="match status" value="1"/>
</dbReference>
<dbReference type="Gene3D" id="1.10.600.10">
    <property type="entry name" value="Farnesyl Diphosphate Synthase"/>
    <property type="match status" value="1"/>
</dbReference>
<dbReference type="Gene3D" id="1.50.10.130">
    <property type="entry name" value="Terpene synthase, N-terminal domain"/>
    <property type="match status" value="1"/>
</dbReference>
<dbReference type="InterPro" id="IPR008949">
    <property type="entry name" value="Isoprenoid_synthase_dom_sf"/>
</dbReference>
<dbReference type="InterPro" id="IPR044814">
    <property type="entry name" value="Terpene_cyclase_plant_C1"/>
</dbReference>
<dbReference type="InterPro" id="IPR001906">
    <property type="entry name" value="Terpene_synth_N"/>
</dbReference>
<dbReference type="InterPro" id="IPR036965">
    <property type="entry name" value="Terpene_synth_N_sf"/>
</dbReference>
<dbReference type="InterPro" id="IPR050148">
    <property type="entry name" value="Terpene_synthase-like"/>
</dbReference>
<dbReference type="InterPro" id="IPR005630">
    <property type="entry name" value="Terpene_synthase_metal-bd"/>
</dbReference>
<dbReference type="InterPro" id="IPR008930">
    <property type="entry name" value="Terpenoid_cyclase/PrenylTrfase"/>
</dbReference>
<dbReference type="PANTHER" id="PTHR31225">
    <property type="entry name" value="OS04G0344100 PROTEIN-RELATED"/>
    <property type="match status" value="1"/>
</dbReference>
<dbReference type="PANTHER" id="PTHR31225:SF9">
    <property type="entry name" value="TERPENE SYNTHASE 10"/>
    <property type="match status" value="1"/>
</dbReference>
<dbReference type="Pfam" id="PF01397">
    <property type="entry name" value="Terpene_synth"/>
    <property type="match status" value="1"/>
</dbReference>
<dbReference type="Pfam" id="PF03936">
    <property type="entry name" value="Terpene_synth_C"/>
    <property type="match status" value="1"/>
</dbReference>
<dbReference type="SFLD" id="SFLDS00005">
    <property type="entry name" value="Isoprenoid_Synthase_Type_I"/>
    <property type="match status" value="1"/>
</dbReference>
<dbReference type="SFLD" id="SFLDG01604">
    <property type="entry name" value="Terpene_Cyclase_Like_1_C_Termi"/>
    <property type="match status" value="1"/>
</dbReference>
<dbReference type="SUPFAM" id="SSF48239">
    <property type="entry name" value="Terpenoid cyclases/Protein prenyltransferases"/>
    <property type="match status" value="1"/>
</dbReference>
<dbReference type="SUPFAM" id="SSF48576">
    <property type="entry name" value="Terpenoid synthases"/>
    <property type="match status" value="1"/>
</dbReference>
<name>TPS1_COFAR</name>
<keyword id="KW-0150">Chloroplast</keyword>
<keyword id="KW-0456">Lyase</keyword>
<keyword id="KW-0460">Magnesium</keyword>
<keyword id="KW-0479">Metal-binding</keyword>
<keyword id="KW-0934">Plastid</keyword>
<keyword id="KW-1185">Reference proteome</keyword>
<keyword id="KW-0809">Transit peptide</keyword>
<comment type="function">
    <text evidence="5">Monoterpene synthase (mono-TPS) involved in the biosynthesis of monoterpenes natural products, constituent of coffee beverage aroma (PubMed:23398891). Catalyzes the conversion of (2E)-geranyl diphosphate (GPP) into limonene, beta-pinene, sabinene and beta-myrcene, and, as minor products, alpha-pinene and alpha-terpinolene (PubMed:23398891). Can also, with a low efficiency, use farnesyl pyrophosphate (FPP) as substrate to produce beta-farnesene (PubMed:23398891). Not able to use geranylgeranyl pyrophosphate (GGPP) as substrate (PubMed:23398891).</text>
</comment>
<comment type="catalytic activity">
    <reaction evidence="5">
        <text>(2E,6E)-farnesyl diphosphate = (E)-beta-farnesene + diphosphate</text>
        <dbReference type="Rhea" id="RHEA:27425"/>
        <dbReference type="ChEBI" id="CHEBI:10418"/>
        <dbReference type="ChEBI" id="CHEBI:33019"/>
        <dbReference type="ChEBI" id="CHEBI:175763"/>
        <dbReference type="EC" id="4.2.3.47"/>
    </reaction>
    <physiologicalReaction direction="left-to-right" evidence="5">
        <dbReference type="Rhea" id="RHEA:27426"/>
    </physiologicalReaction>
</comment>
<comment type="catalytic activity">
    <reaction evidence="5">
        <text>(2E)-geranyl diphosphate = limonene + diphosphate</text>
        <dbReference type="Rhea" id="RHEA:68640"/>
        <dbReference type="ChEBI" id="CHEBI:15384"/>
        <dbReference type="ChEBI" id="CHEBI:33019"/>
        <dbReference type="ChEBI" id="CHEBI:58057"/>
    </reaction>
    <physiologicalReaction direction="left-to-right" evidence="5">
        <dbReference type="Rhea" id="RHEA:68641"/>
    </physiologicalReaction>
</comment>
<comment type="catalytic activity">
    <reaction evidence="5">
        <text>(2E)-geranyl diphosphate = beta-pinene + diphosphate</text>
        <dbReference type="Rhea" id="RHEA:25666"/>
        <dbReference type="ChEBI" id="CHEBI:33019"/>
        <dbReference type="ChEBI" id="CHEBI:50025"/>
        <dbReference type="ChEBI" id="CHEBI:58057"/>
    </reaction>
    <physiologicalReaction direction="left-to-right" evidence="5">
        <dbReference type="Rhea" id="RHEA:25667"/>
    </physiologicalReaction>
</comment>
<comment type="catalytic activity">
    <reaction evidence="5">
        <text>(2E)-geranyl diphosphate = sabinene + diphosphate</text>
        <dbReference type="Rhea" id="RHEA:68636"/>
        <dbReference type="ChEBI" id="CHEBI:33019"/>
        <dbReference type="ChEBI" id="CHEBI:50027"/>
        <dbReference type="ChEBI" id="CHEBI:58057"/>
    </reaction>
    <physiologicalReaction direction="left-to-right" evidence="5">
        <dbReference type="Rhea" id="RHEA:68637"/>
    </physiologicalReaction>
</comment>
<comment type="catalytic activity">
    <reaction evidence="5">
        <text>(2E)-geranyl diphosphate = beta-myrcene + diphosphate</text>
        <dbReference type="Rhea" id="RHEA:16965"/>
        <dbReference type="ChEBI" id="CHEBI:17221"/>
        <dbReference type="ChEBI" id="CHEBI:33019"/>
        <dbReference type="ChEBI" id="CHEBI:58057"/>
        <dbReference type="EC" id="4.2.3.15"/>
    </reaction>
    <physiologicalReaction direction="left-to-right" evidence="5">
        <dbReference type="Rhea" id="RHEA:16966"/>
    </physiologicalReaction>
</comment>
<comment type="catalytic activity">
    <reaction evidence="5">
        <text>(2E)-geranyl diphosphate = alpha-pinene + diphosphate</text>
        <dbReference type="Rhea" id="RHEA:25662"/>
        <dbReference type="ChEBI" id="CHEBI:33019"/>
        <dbReference type="ChEBI" id="CHEBI:36740"/>
        <dbReference type="ChEBI" id="CHEBI:58057"/>
    </reaction>
    <physiologicalReaction direction="left-to-right" evidence="5">
        <dbReference type="Rhea" id="RHEA:25663"/>
    </physiologicalReaction>
</comment>
<comment type="catalytic activity">
    <reaction evidence="5">
        <text>(2E)-geranyl diphosphate = terpinolene + diphosphate</text>
        <dbReference type="Rhea" id="RHEA:25500"/>
        <dbReference type="ChEBI" id="CHEBI:9457"/>
        <dbReference type="ChEBI" id="CHEBI:33019"/>
        <dbReference type="ChEBI" id="CHEBI:58057"/>
        <dbReference type="EC" id="4.2.3.113"/>
    </reaction>
    <physiologicalReaction direction="left-to-right" evidence="5">
        <dbReference type="Rhea" id="RHEA:25501"/>
    </physiologicalReaction>
</comment>
<comment type="cofactor">
    <cofactor evidence="1">
        <name>Mg(2+)</name>
        <dbReference type="ChEBI" id="CHEBI:18420"/>
    </cofactor>
    <cofactor evidence="1">
        <name>Mn(2+)</name>
        <dbReference type="ChEBI" id="CHEBI:29035"/>
    </cofactor>
    <text evidence="1">Binds 3 Mg(2+) or Mn(2+) ions per subunit.</text>
</comment>
<comment type="pathway">
    <text evidence="5">Secondary metabolite biosynthesis; terpenoid biosynthesis.</text>
</comment>
<comment type="subunit">
    <text evidence="3">Monomer.</text>
</comment>
<comment type="subcellular location">
    <subcellularLocation>
        <location evidence="4">Plastid</location>
        <location evidence="4">Chloroplast</location>
    </subcellularLocation>
</comment>
<comment type="tissue specificity">
    <text evidence="5">Confined to fruits.</text>
</comment>
<comment type="developmental stage">
    <text evidence="5">Observed during fruits development 25 weeks after pollination.</text>
</comment>
<comment type="domain">
    <text evidence="7">The Asp-Asp-Xaa-Xaa-Asp/Glu (DDXXD/E) motif is important for the catalytic activity, presumably through binding to Mg(2+).</text>
</comment>
<comment type="similarity">
    <text evidence="7">Belongs to the terpene synthase family. Tpsb subfamily.</text>
</comment>
<comment type="sequence caution" evidence="7">
    <conflict type="erroneous initiation">
        <sequence resource="EMBL-CDS" id="CCM43927"/>
    </conflict>
    <text>Truncated N-terminus.</text>
</comment>
<organism>
    <name type="scientific">Coffea arabica</name>
    <name type="common">Arabian coffee</name>
    <dbReference type="NCBI Taxonomy" id="13443"/>
    <lineage>
        <taxon>Eukaryota</taxon>
        <taxon>Viridiplantae</taxon>
        <taxon>Streptophyta</taxon>
        <taxon>Embryophyta</taxon>
        <taxon>Tracheophyta</taxon>
        <taxon>Spermatophyta</taxon>
        <taxon>Magnoliopsida</taxon>
        <taxon>eudicotyledons</taxon>
        <taxon>Gunneridae</taxon>
        <taxon>Pentapetalae</taxon>
        <taxon>asterids</taxon>
        <taxon>lamiids</taxon>
        <taxon>Gentianales</taxon>
        <taxon>Rubiaceae</taxon>
        <taxon>Ixoroideae</taxon>
        <taxon>Gardenieae complex</taxon>
        <taxon>Bertiereae - Coffeeae clade</taxon>
        <taxon>Coffeeae</taxon>
        <taxon>Coffea</taxon>
    </lineage>
</organism>
<accession>A0A6P6W6H5</accession>
<accession>R4YVJ5</accession>
<sequence length="606" mass="69977">MAIINLPVPTNSSSEVNKHNHLRSCLPSGRATFTTLSAAAMRSATMAAANVREQSGQKQQLINRRSGNYEAPLWEFDYIQSLKNEYAGDIYVSRANELKEQVKMMLDEEDMKLLDCMELVDGLERLGLAYHFEGRINRLLSSDYKAIHEGNHQRNKEDLYAAALEFRIFRQNGFNVPQDIFNDFITEDGEFDESLSEDTMGLLSLYEASFLSLEGEATLDLAREFTTKHLNNYLGKENTDQNLRILVYHALELPLRWRAPRIEARWYIDAYERSPNVNPTLLELAKIDFNIVQAIHQQDLKHVSWWWKNIRIAEKLTFIRDRIVENFFWAIGAVFEPQYGSCRRMLTKVFALITMIDDIYDVYGTLEELELFTDAVDRWDVKAIDQLPDYMRVGYLGFFNSINEMAYDALKEQGVHIVEYLRKVWADLCKAYLQEAKWYYAGYTPTVEEYLENAWVSMSVPVMLMHAYAGVTNPMNKEAMDVLDTHDIVRCSSYLLRFADDLGTSPGEMKRGDVPKLVQCYMKEAGCSEEESREHVWFLLRETWKKMNKDSEWAESPFSKTFVTAAKNFGRVALVMYQYGDGHGLHSNPEAKDRILASLFSPVPPA</sequence>
<protein>
    <recommendedName>
        <fullName evidence="6">Limonene synthase, chloroplastic</fullName>
        <ecNumber evidence="5">4.2.3.-</ecNumber>
    </recommendedName>
    <alternativeName>
        <fullName evidence="6">Alpha-pinene synthase, chloroplastic</fullName>
        <ecNumber evidence="5">4.2.3.-</ecNumber>
    </alternativeName>
    <alternativeName>
        <fullName evidence="8">Beta-farnesene synthase, chloroplastic</fullName>
        <ecNumber evidence="5">4.2.3.47</ecNumber>
    </alternativeName>
    <alternativeName>
        <fullName evidence="6">Beta-myrcene synthase, chloroplastic</fullName>
        <ecNumber evidence="5">4.2.3.15</ecNumber>
    </alternativeName>
    <alternativeName>
        <fullName evidence="6">Beta-pinene synthase, chloroplastic</fullName>
        <ecNumber evidence="5">4.2.3.-</ecNumber>
    </alternativeName>
    <alternativeName>
        <fullName evidence="6">Sabinene synthase, chloroplastic</fullName>
        <ecNumber evidence="5">4.2.3.-</ecNumber>
    </alternativeName>
    <alternativeName>
        <fullName evidence="6">Terpinolene synthase, chloroplastic</fullName>
        <ecNumber evidence="5">4.2.3.113</ecNumber>
    </alternativeName>
</protein>
<reference key="1">
    <citation type="journal article" date="2013" name="Phytochemistry">
        <title>Functional characterization of three Coffea arabica L. monoterpene synthases: insights into the enzymatic machinery of coffee aroma.</title>
        <authorList>
            <person name="Del Terra L."/>
            <person name="Lonzarich V."/>
            <person name="Asquini E."/>
            <person name="Navarini L."/>
            <person name="Graziosi G."/>
            <person name="Suggi Liverani F."/>
            <person name="Pallavicini A."/>
        </authorList>
    </citation>
    <scope>NUCLEOTIDE SEQUENCE [MRNA] OF 13-606</scope>
    <scope>FUNCTION</scope>
    <scope>CATALYTIC ACTIVITY</scope>
    <scope>PATHWAY</scope>
    <scope>TISSUE SPECIFICITY</scope>
    <scope>DEVELOPMENTAL STAGE</scope>
    <source>
        <strain>cv. Catuai Red</strain>
        <tissue>Flower</tissue>
        <tissue>Fruit</tissue>
        <tissue>Seed</tissue>
    </source>
</reference>
<reference key="2">
    <citation type="submission" date="2018-10" db="EMBL/GenBank/DDBJ databases">
        <title>The Coffea arabica cultivar Caturra genome provides a strong foundation for breeding and functional genomics studies in coffee.</title>
        <authorList>
            <person name="Zimin A.V."/>
            <person name="Yepes M."/>
            <person name="Maldonado C.E."/>
            <person name="Navarro L."/>
            <person name="Kovaka S."/>
            <person name="Pertea M."/>
            <person name="Gaitan A."/>
            <person name="Aldwinckle H."/>
        </authorList>
    </citation>
    <scope>NUCLEOTIDE SEQUENCE [LARGE SCALE GENOMIC DNA]</scope>
    <source>
        <strain>cv. Caturra red</strain>
    </source>
</reference>
<feature type="transit peptide" description="Chloroplast" evidence="4">
    <location>
        <begin position="1"/>
        <end position="38"/>
    </location>
</feature>
<feature type="chain" id="PRO_0000455258" description="Limonene synthase, chloroplastic">
    <location>
        <begin position="39"/>
        <end position="606"/>
    </location>
</feature>
<feature type="short sequence motif" description="DDXXD motif" evidence="7">
    <location>
        <begin position="357"/>
        <end position="361"/>
    </location>
</feature>
<feature type="binding site" evidence="2">
    <location>
        <position position="320"/>
    </location>
    <ligand>
        <name>(2E)-geranyl diphosphate</name>
        <dbReference type="ChEBI" id="CHEBI:58057"/>
    </ligand>
</feature>
<feature type="binding site" evidence="2">
    <location>
        <position position="357"/>
    </location>
    <ligand>
        <name>(2E)-geranyl diphosphate</name>
        <dbReference type="ChEBI" id="CHEBI:58057"/>
    </ligand>
</feature>
<feature type="binding site" evidence="2">
    <location>
        <position position="357"/>
    </location>
    <ligand>
        <name>Mg(2+)</name>
        <dbReference type="ChEBI" id="CHEBI:18420"/>
        <label>1</label>
    </ligand>
</feature>
<feature type="binding site" evidence="2">
    <location>
        <position position="357"/>
    </location>
    <ligand>
        <name>Mg(2+)</name>
        <dbReference type="ChEBI" id="CHEBI:18420"/>
        <label>2</label>
    </ligand>
</feature>
<feature type="binding site" evidence="2">
    <location>
        <position position="361"/>
    </location>
    <ligand>
        <name>(2E)-geranyl diphosphate</name>
        <dbReference type="ChEBI" id="CHEBI:58057"/>
    </ligand>
</feature>
<feature type="binding site" evidence="2">
    <location>
        <position position="361"/>
    </location>
    <ligand>
        <name>Mg(2+)</name>
        <dbReference type="ChEBI" id="CHEBI:18420"/>
        <label>1</label>
    </ligand>
</feature>
<feature type="binding site" evidence="2">
    <location>
        <position position="361"/>
    </location>
    <ligand>
        <name>Mg(2+)</name>
        <dbReference type="ChEBI" id="CHEBI:18420"/>
        <label>2</label>
    </ligand>
</feature>
<feature type="binding site" evidence="2">
    <location>
        <position position="497"/>
    </location>
    <ligand>
        <name>(2E)-geranyl diphosphate</name>
        <dbReference type="ChEBI" id="CHEBI:58057"/>
    </ligand>
</feature>
<feature type="binding site" evidence="2">
    <location>
        <position position="500"/>
    </location>
    <ligand>
        <name>(2E)-geranyl diphosphate</name>
        <dbReference type="ChEBI" id="CHEBI:58057"/>
    </ligand>
</feature>
<feature type="binding site" evidence="2">
    <location>
        <position position="500"/>
    </location>
    <ligand>
        <name>Mg(2+)</name>
        <dbReference type="ChEBI" id="CHEBI:18420"/>
        <label>3</label>
    </ligand>
</feature>
<feature type="binding site" evidence="2">
    <location>
        <position position="504"/>
    </location>
    <ligand>
        <name>Mg(2+)</name>
        <dbReference type="ChEBI" id="CHEBI:18420"/>
        <label>3</label>
    </ligand>
</feature>
<feature type="binding site" evidence="2">
    <location>
        <position position="508"/>
    </location>
    <ligand>
        <name>Mg(2+)</name>
        <dbReference type="ChEBI" id="CHEBI:18420"/>
        <label>3</label>
    </ligand>
</feature>
<feature type="sequence conflict" description="In Ref. 1; CCM43927." evidence="7" ref="1">
    <original>R</original>
    <variation>K</variation>
    <location>
        <position position="422"/>
    </location>
</feature>
<proteinExistence type="evidence at protein level"/>
<gene>
    <name evidence="6" type="primary">TPS1</name>
    <name type="ORF">LOC113729710</name>
</gene>